<organism>
    <name type="scientific">Mycoplasma genitalium (strain ATCC 33530 / DSM 19775 / NCTC 10195 / G37)</name>
    <name type="common">Mycoplasmoides genitalium</name>
    <dbReference type="NCBI Taxonomy" id="243273"/>
    <lineage>
        <taxon>Bacteria</taxon>
        <taxon>Bacillati</taxon>
        <taxon>Mycoplasmatota</taxon>
        <taxon>Mycoplasmoidales</taxon>
        <taxon>Mycoplasmoidaceae</taxon>
        <taxon>Mycoplasmoides</taxon>
    </lineage>
</organism>
<gene>
    <name type="ordered locus">MG223</name>
</gene>
<dbReference type="EMBL" id="L43967">
    <property type="protein sequence ID" value="AAC71444.1"/>
    <property type="molecule type" value="Genomic_DNA"/>
</dbReference>
<dbReference type="PIR" id="F64224">
    <property type="entry name" value="F64224"/>
</dbReference>
<dbReference type="RefSeq" id="WP_010869381.1">
    <property type="nucleotide sequence ID" value="NC_000908.2"/>
</dbReference>
<dbReference type="STRING" id="243273.MG_223"/>
<dbReference type="GeneID" id="88282368"/>
<dbReference type="KEGG" id="mge:MG_223"/>
<dbReference type="eggNOG" id="ENOG5030N8H">
    <property type="taxonomic scope" value="Bacteria"/>
</dbReference>
<dbReference type="HOGENOM" id="CLU_655237_0_0_14"/>
<dbReference type="InParanoid" id="P47465"/>
<dbReference type="OrthoDB" id="9960103at2"/>
<dbReference type="BioCyc" id="MGEN243273:G1GJ2-269-MONOMER"/>
<dbReference type="Proteomes" id="UP000000807">
    <property type="component" value="Chromosome"/>
</dbReference>
<dbReference type="NCBIfam" id="NF045748">
    <property type="entry name" value="MPN316"/>
    <property type="match status" value="1"/>
</dbReference>
<keyword id="KW-1185">Reference proteome</keyword>
<reference key="1">
    <citation type="journal article" date="1995" name="Science">
        <title>The minimal gene complement of Mycoplasma genitalium.</title>
        <authorList>
            <person name="Fraser C.M."/>
            <person name="Gocayne J.D."/>
            <person name="White O."/>
            <person name="Adams M.D."/>
            <person name="Clayton R.A."/>
            <person name="Fleischmann R.D."/>
            <person name="Bult C.J."/>
            <person name="Kerlavage A.R."/>
            <person name="Sutton G.G."/>
            <person name="Kelley J.M."/>
            <person name="Fritchman J.L."/>
            <person name="Weidman J.F."/>
            <person name="Small K.V."/>
            <person name="Sandusky M."/>
            <person name="Fuhrmann J.L."/>
            <person name="Nguyen D.T."/>
            <person name="Utterback T.R."/>
            <person name="Saudek D.M."/>
            <person name="Phillips C.A."/>
            <person name="Merrick J.M."/>
            <person name="Tomb J.-F."/>
            <person name="Dougherty B.A."/>
            <person name="Bott K.F."/>
            <person name="Hu P.-C."/>
            <person name="Lucier T.S."/>
            <person name="Peterson S.N."/>
            <person name="Smith H.O."/>
            <person name="Hutchison C.A. III"/>
            <person name="Venter J.C."/>
        </authorList>
    </citation>
    <scope>NUCLEOTIDE SEQUENCE [LARGE SCALE GENOMIC DNA]</scope>
    <source>
        <strain>ATCC 33530 / DSM 19775 / NCTC 10195 / G37</strain>
    </source>
</reference>
<protein>
    <recommendedName>
        <fullName>Uncharacterized protein MG223</fullName>
    </recommendedName>
</protein>
<feature type="chain" id="PRO_0000210465" description="Uncharacterized protein MG223">
    <location>
        <begin position="1"/>
        <end position="411"/>
    </location>
</feature>
<proteinExistence type="predicted"/>
<accession>P47465</accession>
<name>Y223_MYCGE</name>
<sequence>MYKPKNINSVLTFYKDQIQLVVSDDQNQFNILFYQTIDNDGFYSKQQLKNKLRLKLALNQLVDQANYFLGFKLEKVVVVLAELIDDLKIHNFKSEIFFTGYDFDHKAMIKKEKQRFCEQNNQLTVMDTMVLNYHDVINNKITKSFAFNKSYVANLVAYSSKSNLIGELKFFLKRNVNLKVKKIISHHLALANSLSKKQNNMFVYLGQKTTELMLFMDNALVDVITNQFGKNHFIDIPANQENKPLLEFLVDNTTKIGDCYSLGMTYTDGDSYKEIKALTIGDLMQTVSDKIKTLIDFINSGSLTFFNKFKTLPKLLYFYTRSKQITNLFQANVALINPQFKTVDIYKNKIQFISENYLLSCEAISLQITNRIKNQISFDFTNADNIQKPKPKKHFMILSKHLTKFVQRLVK</sequence>